<feature type="chain" id="PRO_0000114668" description="Cytoplasmic dynein 1 light intermediate chain 1">
    <location>
        <begin position="1"/>
        <end position="523"/>
    </location>
</feature>
<feature type="region of interest" description="Disordered" evidence="4">
    <location>
        <begin position="1"/>
        <end position="45"/>
    </location>
</feature>
<feature type="region of interest" description="Disordered" evidence="4">
    <location>
        <begin position="387"/>
        <end position="434"/>
    </location>
</feature>
<feature type="region of interest" description="Disordered" evidence="4">
    <location>
        <begin position="457"/>
        <end position="523"/>
    </location>
</feature>
<feature type="compositionally biased region" description="Low complexity" evidence="4">
    <location>
        <begin position="412"/>
        <end position="421"/>
    </location>
</feature>
<feature type="compositionally biased region" description="Gly residues" evidence="4">
    <location>
        <begin position="458"/>
        <end position="473"/>
    </location>
</feature>
<feature type="compositionally biased region" description="Low complexity" evidence="4">
    <location>
        <begin position="474"/>
        <end position="483"/>
    </location>
</feature>
<feature type="binding site" evidence="3">
    <location>
        <begin position="74"/>
        <end position="81"/>
    </location>
    <ligand>
        <name>ATP</name>
        <dbReference type="ChEBI" id="CHEBI:30616"/>
    </ligand>
</feature>
<feature type="modified residue" description="Phosphoserine" evidence="9">
    <location>
        <position position="207"/>
    </location>
</feature>
<feature type="modified residue" description="Phosphothreonine" evidence="2">
    <location>
        <position position="213"/>
    </location>
</feature>
<feature type="modified residue" description="Phosphoserine" evidence="2">
    <location>
        <position position="398"/>
    </location>
</feature>
<feature type="modified residue" description="Phosphoserine" evidence="2">
    <location>
        <position position="405"/>
    </location>
</feature>
<feature type="modified residue" description="Phosphothreonine" evidence="2">
    <location>
        <position position="408"/>
    </location>
</feature>
<feature type="modified residue" description="Phosphoserine" evidence="2">
    <location>
        <position position="412"/>
    </location>
</feature>
<feature type="modified residue" description="Phosphoserine" evidence="2">
    <location>
        <position position="419"/>
    </location>
</feature>
<feature type="modified residue" description="Phosphoserine" evidence="2">
    <location>
        <position position="421"/>
    </location>
</feature>
<feature type="modified residue" description="Phosphoserine" evidence="2">
    <location>
        <position position="427"/>
    </location>
</feature>
<feature type="modified residue" description="Phosphoserine" evidence="2">
    <location>
        <position position="486"/>
    </location>
</feature>
<feature type="modified residue" description="Phosphoserine" evidence="2">
    <location>
        <position position="510"/>
    </location>
</feature>
<feature type="modified residue" description="Phosphothreonine" evidence="2">
    <location>
        <position position="512"/>
    </location>
</feature>
<feature type="modified residue" description="Phosphothreonine" evidence="2">
    <location>
        <position position="513"/>
    </location>
</feature>
<feature type="modified residue" description="Phosphoserine" evidence="9">
    <location>
        <position position="516"/>
    </location>
</feature>
<comment type="function">
    <text evidence="1 2">Acts as one of several non-catalytic accessory components of the cytoplasmic dynein 1 complex that are thought to be involved in linking dynein to cargos and to adapter proteins that regulate dynein function. Cytoplasmic dynein 1 acts as a motor for the intracellular retrograde motility of vesicles and organelles along microtubules. May play a role in binding dynein to membranous organelles or chromosomes. Probably involved in the microtubule-dependent transport of pericentrin. Is required for progress through the spindle assembly checkpoint. The phosphorylated form appears to be involved in the selective removal of MAD1L1 and MAD1L2 but not BUB1B from kinetochores (By similarity). Forms a functional Rab11/RAB11FIP3/dynein complex onto endosomal membrane that regulates the movement of peripheral sorting endosomes (SE) along microtubule tracks toward the microtubule organizing center/centrosome, generating the endosomal recycling compartment (ERC) (By similarity).</text>
</comment>
<comment type="subunit">
    <text evidence="2 5 6 7 8">Homodimer (Probable). The cytoplasmic dynein 1 complex consists of two catalytic heavy chains (HCs) and a number of non-catalytic subunits presented by intermediate chains (ICs), light intermediate chains (LICs) and light chains (LCs); the composition seems to vary in respect to the IC, LIC and LC composition. The heavy chain homodimer serves as a scaffold for the probable homodimeric assembly of the respective non-catalytic subunits. The ICs and LICs bind directly to the HC dimer and the LCs assemble on the IC dimer. Self-associates. Interacts with DYNC1H1; DYNC1LI1 and DYNC1LI2 bind mutually exclusive to DYNC1H1. Interacts with PCNT. Forms a complex with RAB11FIP3 and RAB11A1; the interaction between DYNC1LI1 and RAB11FIP3 is direct and induces DYNC1LI1 localization onto endosomal membrane; the complex regulates endocytic trafficking (By similarity). Interacts with RUFY3 (By similarity).</text>
</comment>
<comment type="subcellular location">
    <subcellularLocation>
        <location evidence="8">Cytoplasm</location>
    </subcellularLocation>
    <subcellularLocation>
        <location evidence="2">Chromosome</location>
        <location evidence="2">Centromere</location>
        <location evidence="2">Kinetochore</location>
    </subcellularLocation>
    <subcellularLocation>
        <location evidence="2">Cytoplasm</location>
        <location evidence="2">Cytoskeleton</location>
        <location evidence="2">Spindle pole</location>
    </subcellularLocation>
    <subcellularLocation>
        <location evidence="2">Recycling endosome membrane</location>
    </subcellularLocation>
</comment>
<comment type="PTM">
    <text evidence="1">Phosphorylated during mitosis but not in interphase.</text>
</comment>
<comment type="similarity">
    <text evidence="8">Belongs to the dynein light intermediate chain family.</text>
</comment>
<organism>
    <name type="scientific">Rattus norvegicus</name>
    <name type="common">Rat</name>
    <dbReference type="NCBI Taxonomy" id="10116"/>
    <lineage>
        <taxon>Eukaryota</taxon>
        <taxon>Metazoa</taxon>
        <taxon>Chordata</taxon>
        <taxon>Craniata</taxon>
        <taxon>Vertebrata</taxon>
        <taxon>Euteleostomi</taxon>
        <taxon>Mammalia</taxon>
        <taxon>Eutheria</taxon>
        <taxon>Euarchontoglires</taxon>
        <taxon>Glires</taxon>
        <taxon>Rodentia</taxon>
        <taxon>Myomorpha</taxon>
        <taxon>Muroidea</taxon>
        <taxon>Muridae</taxon>
        <taxon>Murinae</taxon>
        <taxon>Rattus</taxon>
    </lineage>
</organism>
<accession>Q9QXU8</accession>
<protein>
    <recommendedName>
        <fullName>Cytoplasmic dynein 1 light intermediate chain 1</fullName>
    </recommendedName>
    <alternativeName>
        <fullName>Dynein light chain A</fullName>
        <shortName>DLC-A</shortName>
    </alternativeName>
    <alternativeName>
        <fullName>Dynein light intermediate chain 1, cytosolic</fullName>
    </alternativeName>
</protein>
<sequence>MAAVGRVGSFGSSPPGLASTYASGPLANELASGSGGPAAGDDEDGQNLWSRILREVSTRSRSKLPTGKNVLLLGEDGAGKTSLIRRIQGIEEYKKGRGLEYLYLNVHDEDRDDQTRCNVWILDGDLYHKGLLKFSLDALSLRDTLVMLVVDMSKPWTALDSLQKWASVVREHVDKLKIPPEEMKEMEQKLIRDFQEYVEPGEDFPASPQRRATAAQEDRDDSVVLPLGADTLTHNLGLPVLVVCTKCDAISVLEKEHDYRDEHFDFIQSHIRKFCLQYGAALIYTSVKENKNIDLVYKYIVQKLYGFPYKIPAVVVEKDAVFIPAGWDNDKKIGILHENFQTLKIEDNFEDIITKPPVRKFVHEKEIMAEDDQVFLMKLQSLLAKQPPTAAGRPVDASPRVPGGSPRTPNRSVSSNVASVSPIPAGSKKIDPNMKAGATSEGVLANFFNSLLSKKTGSPGGPGVGGSPGGGAAGASTSLPPSAKKSGQKPVLSDVHAELDRITRKPASVSPTTPPSPTEGEAS</sequence>
<proteinExistence type="evidence at protein level"/>
<evidence type="ECO:0000250" key="1"/>
<evidence type="ECO:0000250" key="2">
    <source>
        <dbReference type="UniProtKB" id="Q9Y6G9"/>
    </source>
</evidence>
<evidence type="ECO:0000255" key="3"/>
<evidence type="ECO:0000256" key="4">
    <source>
        <dbReference type="SAM" id="MobiDB-lite"/>
    </source>
</evidence>
<evidence type="ECO:0000269" key="5">
    <source>
    </source>
</evidence>
<evidence type="ECO:0000269" key="6">
    <source>
    </source>
</evidence>
<evidence type="ECO:0000269" key="7">
    <source>
    </source>
</evidence>
<evidence type="ECO:0000305" key="8"/>
<evidence type="ECO:0007744" key="9">
    <source>
    </source>
</evidence>
<gene>
    <name type="primary">Dync1li1</name>
    <name type="synonym">Dncli1</name>
</gene>
<keyword id="KW-0067">ATP-binding</keyword>
<keyword id="KW-0131">Cell cycle</keyword>
<keyword id="KW-0132">Cell division</keyword>
<keyword id="KW-0137">Centromere</keyword>
<keyword id="KW-0158">Chromosome</keyword>
<keyword id="KW-0963">Cytoplasm</keyword>
<keyword id="KW-0206">Cytoskeleton</keyword>
<keyword id="KW-0243">Dynein</keyword>
<keyword id="KW-0967">Endosome</keyword>
<keyword id="KW-0995">Kinetochore</keyword>
<keyword id="KW-0472">Membrane</keyword>
<keyword id="KW-0493">Microtubule</keyword>
<keyword id="KW-0505">Motor protein</keyword>
<keyword id="KW-0547">Nucleotide-binding</keyword>
<keyword id="KW-0597">Phosphoprotein</keyword>
<keyword id="KW-1185">Reference proteome</keyword>
<keyword id="KW-0813">Transport</keyword>
<dbReference type="EMBL" id="AF181992">
    <property type="protein sequence ID" value="AAF22294.1"/>
    <property type="molecule type" value="mRNA"/>
</dbReference>
<dbReference type="RefSeq" id="NP_665715.1">
    <property type="nucleotide sequence ID" value="NM_145772.1"/>
</dbReference>
<dbReference type="SMR" id="Q9QXU8"/>
<dbReference type="BioGRID" id="251663">
    <property type="interactions" value="2"/>
</dbReference>
<dbReference type="CORUM" id="Q9QXU8"/>
<dbReference type="FunCoup" id="Q9QXU8">
    <property type="interactions" value="3431"/>
</dbReference>
<dbReference type="IntAct" id="Q9QXU8">
    <property type="interactions" value="2"/>
</dbReference>
<dbReference type="MINT" id="Q9QXU8"/>
<dbReference type="STRING" id="10116.ENSRNOP00000014532"/>
<dbReference type="GlyGen" id="Q9QXU8">
    <property type="glycosylation" value="1 site"/>
</dbReference>
<dbReference type="iPTMnet" id="Q9QXU8"/>
<dbReference type="PhosphoSitePlus" id="Q9QXU8"/>
<dbReference type="SwissPalm" id="Q9QXU8"/>
<dbReference type="jPOST" id="Q9QXU8"/>
<dbReference type="PaxDb" id="10116-ENSRNOP00000014532"/>
<dbReference type="GeneID" id="252902"/>
<dbReference type="KEGG" id="rno:252902"/>
<dbReference type="UCSC" id="RGD:71072">
    <property type="organism name" value="rat"/>
</dbReference>
<dbReference type="AGR" id="RGD:71072"/>
<dbReference type="CTD" id="51143"/>
<dbReference type="RGD" id="71072">
    <property type="gene designation" value="Dync1li1"/>
</dbReference>
<dbReference type="eggNOG" id="KOG3905">
    <property type="taxonomic scope" value="Eukaryota"/>
</dbReference>
<dbReference type="InParanoid" id="Q9QXU8"/>
<dbReference type="OrthoDB" id="27603at2759"/>
<dbReference type="PhylomeDB" id="Q9QXU8"/>
<dbReference type="Reactome" id="R-RNO-141444">
    <property type="pathway name" value="Amplification of signal from unattached kinetochores via a MAD2 inhibitory signal"/>
</dbReference>
<dbReference type="Reactome" id="R-RNO-2132295">
    <property type="pathway name" value="MHC class II antigen presentation"/>
</dbReference>
<dbReference type="Reactome" id="R-RNO-2467813">
    <property type="pathway name" value="Separation of Sister Chromatids"/>
</dbReference>
<dbReference type="Reactome" id="R-RNO-2500257">
    <property type="pathway name" value="Resolution of Sister Chromatid Cohesion"/>
</dbReference>
<dbReference type="Reactome" id="R-RNO-3371497">
    <property type="pathway name" value="HSP90 chaperone cycle for steroid hormone receptors (SHR) in the presence of ligand"/>
</dbReference>
<dbReference type="Reactome" id="R-RNO-5663220">
    <property type="pathway name" value="RHO GTPases Activate Formins"/>
</dbReference>
<dbReference type="Reactome" id="R-RNO-6798695">
    <property type="pathway name" value="Neutrophil degranulation"/>
</dbReference>
<dbReference type="Reactome" id="R-RNO-6807878">
    <property type="pathway name" value="COPI-mediated anterograde transport"/>
</dbReference>
<dbReference type="Reactome" id="R-RNO-6811436">
    <property type="pathway name" value="COPI-independent Golgi-to-ER retrograde traffic"/>
</dbReference>
<dbReference type="Reactome" id="R-RNO-68877">
    <property type="pathway name" value="Mitotic Prometaphase"/>
</dbReference>
<dbReference type="Reactome" id="R-RNO-9646399">
    <property type="pathway name" value="Aggrephagy"/>
</dbReference>
<dbReference type="Reactome" id="R-RNO-9648025">
    <property type="pathway name" value="EML4 and NUDC in mitotic spindle formation"/>
</dbReference>
<dbReference type="PRO" id="PR:Q9QXU8"/>
<dbReference type="Proteomes" id="UP000002494">
    <property type="component" value="Unplaced"/>
</dbReference>
<dbReference type="GO" id="GO:0005813">
    <property type="term" value="C:centrosome"/>
    <property type="evidence" value="ECO:0000314"/>
    <property type="project" value="RGD"/>
</dbReference>
<dbReference type="GO" id="GO:0005868">
    <property type="term" value="C:cytoplasmic dynein complex"/>
    <property type="evidence" value="ECO:0000250"/>
    <property type="project" value="UniProtKB"/>
</dbReference>
<dbReference type="GO" id="GO:0030666">
    <property type="term" value="C:endocytic vesicle membrane"/>
    <property type="evidence" value="ECO:0000250"/>
    <property type="project" value="UniProtKB"/>
</dbReference>
<dbReference type="GO" id="GO:0000776">
    <property type="term" value="C:kinetochore"/>
    <property type="evidence" value="ECO:0000314"/>
    <property type="project" value="RGD"/>
</dbReference>
<dbReference type="GO" id="GO:0005770">
    <property type="term" value="C:late endosome"/>
    <property type="evidence" value="ECO:0000314"/>
    <property type="project" value="RGD"/>
</dbReference>
<dbReference type="GO" id="GO:0005874">
    <property type="term" value="C:microtubule"/>
    <property type="evidence" value="ECO:0007669"/>
    <property type="project" value="UniProtKB-KW"/>
</dbReference>
<dbReference type="GO" id="GO:0055038">
    <property type="term" value="C:recycling endosome membrane"/>
    <property type="evidence" value="ECO:0007669"/>
    <property type="project" value="UniProtKB-SubCell"/>
</dbReference>
<dbReference type="GO" id="GO:0000922">
    <property type="term" value="C:spindle pole"/>
    <property type="evidence" value="ECO:0000250"/>
    <property type="project" value="UniProtKB"/>
</dbReference>
<dbReference type="GO" id="GO:0005524">
    <property type="term" value="F:ATP binding"/>
    <property type="evidence" value="ECO:0007669"/>
    <property type="project" value="UniProtKB-KW"/>
</dbReference>
<dbReference type="GO" id="GO:0045504">
    <property type="term" value="F:dynein heavy chain binding"/>
    <property type="evidence" value="ECO:0000266"/>
    <property type="project" value="RGD"/>
</dbReference>
<dbReference type="GO" id="GO:0019003">
    <property type="term" value="F:GDP binding"/>
    <property type="evidence" value="ECO:0000266"/>
    <property type="project" value="RGD"/>
</dbReference>
<dbReference type="GO" id="GO:0042802">
    <property type="term" value="F:identical protein binding"/>
    <property type="evidence" value="ECO:0000353"/>
    <property type="project" value="RGD"/>
</dbReference>
<dbReference type="GO" id="GO:0060090">
    <property type="term" value="F:molecular adaptor activity"/>
    <property type="evidence" value="ECO:0000266"/>
    <property type="project" value="RGD"/>
</dbReference>
<dbReference type="GO" id="GO:0030674">
    <property type="term" value="F:protein-macromolecule adaptor activity"/>
    <property type="evidence" value="ECO:0000266"/>
    <property type="project" value="RGD"/>
</dbReference>
<dbReference type="GO" id="GO:0051301">
    <property type="term" value="P:cell division"/>
    <property type="evidence" value="ECO:0007669"/>
    <property type="project" value="UniProtKB-KW"/>
</dbReference>
<dbReference type="GO" id="GO:1990090">
    <property type="term" value="P:cellular response to nerve growth factor stimulus"/>
    <property type="evidence" value="ECO:0000314"/>
    <property type="project" value="RGD"/>
</dbReference>
<dbReference type="GO" id="GO:0061502">
    <property type="term" value="P:early endosome to recycling endosome transport"/>
    <property type="evidence" value="ECO:0000266"/>
    <property type="project" value="RGD"/>
</dbReference>
<dbReference type="GO" id="GO:0000226">
    <property type="term" value="P:microtubule cytoskeleton organization"/>
    <property type="evidence" value="ECO:0000318"/>
    <property type="project" value="GO_Central"/>
</dbReference>
<dbReference type="GO" id="GO:0007018">
    <property type="term" value="P:microtubule-based movement"/>
    <property type="evidence" value="ECO:0000250"/>
    <property type="project" value="UniProtKB"/>
</dbReference>
<dbReference type="GO" id="GO:0090267">
    <property type="term" value="P:positive regulation of mitotic cell cycle spindle assembly checkpoint"/>
    <property type="evidence" value="ECO:0000250"/>
    <property type="project" value="UniProtKB"/>
</dbReference>
<dbReference type="GO" id="GO:0046605">
    <property type="term" value="P:regulation of centrosome cycle"/>
    <property type="evidence" value="ECO:0000314"/>
    <property type="project" value="RGD"/>
</dbReference>
<dbReference type="GO" id="GO:0060627">
    <property type="term" value="P:regulation of vesicle-mediated transport"/>
    <property type="evidence" value="ECO:0000250"/>
    <property type="project" value="UniProtKB"/>
</dbReference>
<dbReference type="Gene3D" id="3.40.50.300">
    <property type="entry name" value="P-loop containing nucleotide triphosphate hydrolases"/>
    <property type="match status" value="1"/>
</dbReference>
<dbReference type="InterPro" id="IPR008467">
    <property type="entry name" value="Dynein1_light_intermed_chain"/>
</dbReference>
<dbReference type="InterPro" id="IPR022780">
    <property type="entry name" value="Dynein_light_int_chain"/>
</dbReference>
<dbReference type="InterPro" id="IPR027417">
    <property type="entry name" value="P-loop_NTPase"/>
</dbReference>
<dbReference type="PANTHER" id="PTHR12688:SF2">
    <property type="entry name" value="CYTOPLASMIC DYNEIN 1 LIGHT INTERMEDIATE CHAIN 1"/>
    <property type="match status" value="1"/>
</dbReference>
<dbReference type="PANTHER" id="PTHR12688">
    <property type="entry name" value="DYNEIN LIGHT INTERMEDIATE CHAIN"/>
    <property type="match status" value="1"/>
</dbReference>
<dbReference type="Pfam" id="PF05783">
    <property type="entry name" value="DLIC"/>
    <property type="match status" value="1"/>
</dbReference>
<dbReference type="SUPFAM" id="SSF52540">
    <property type="entry name" value="P-loop containing nucleoside triphosphate hydrolases"/>
    <property type="match status" value="1"/>
</dbReference>
<reference key="1">
    <citation type="journal article" date="2000" name="J. Biol. Chem.">
        <title>Light intermediate chain 1 defines a functional subfraction of cytoplasmic dynein which binds to pericentrin.</title>
        <authorList>
            <person name="Tynan S.H."/>
            <person name="Purohit A."/>
            <person name="Doxsey S.J."/>
            <person name="Vallee R.B."/>
        </authorList>
    </citation>
    <scope>NUCLEOTIDE SEQUENCE [MRNA]</scope>
    <scope>SUBUNIT</scope>
    <scope>INTERACTION WITH PCNT</scope>
</reference>
<reference key="2">
    <citation type="journal article" date="1999" name="J. Cell Biol.">
        <title>Direct interaction of pericentrin with cytoplasmic dynein light intermediate chain contributes to mitotic spindle organization.</title>
        <authorList>
            <person name="Purohit A."/>
            <person name="Tynan S.H."/>
            <person name="Vallee R."/>
            <person name="Doxsey S.J."/>
        </authorList>
    </citation>
    <scope>INTERACTION WITH PCNT</scope>
</reference>
<reference key="3">
    <citation type="journal article" date="2000" name="J. Biol. Chem.">
        <title>Distinct but overlapping sites within the cytoplasmic dynein heavy chain for dimerization and for intermediate chain and light intermediate chain binding.</title>
        <authorList>
            <person name="Tynan S.H."/>
            <person name="Gee M.A."/>
            <person name="Vallee R.B."/>
        </authorList>
    </citation>
    <scope>INTERACTION WITH DYNC1H1</scope>
</reference>
<reference key="4">
    <citation type="journal article" date="2012" name="Nat. Commun.">
        <title>Quantitative maps of protein phosphorylation sites across 14 different rat organs and tissues.</title>
        <authorList>
            <person name="Lundby A."/>
            <person name="Secher A."/>
            <person name="Lage K."/>
            <person name="Nordsborg N.B."/>
            <person name="Dmytriyev A."/>
            <person name="Lundby C."/>
            <person name="Olsen J.V."/>
        </authorList>
    </citation>
    <scope>PHOSPHORYLATION [LARGE SCALE ANALYSIS] AT SER-207 AND SER-516</scope>
    <scope>IDENTIFICATION BY MASS SPECTROMETRY [LARGE SCALE ANALYSIS]</scope>
</reference>
<name>DC1L1_RAT</name>